<sequence>MDIRDEILKLKKEKGAIILAHYYQIPEIQEIADYVGDSYYLSKIAKDCEENIIVFCGVKFMAESAKILSPEKTVILPVMEAGCVMADMATEEGLAKLKEEHPNAKVVCYINSSTEVKALSDVCCTSSNAENIINNLEEKEIIFLPDRNLGSYIQEKTPDKKFILWNGFCIVHEAIQKEEILRLKSEHEGILTVAHPECSKEIRDISDFIGSTSEIINFVNNSSNKKFIIITEEGVLHQLRKNGEEKEFYIPYGKMVCRNMKMTTLKDLYESLLKMENKIEIDEDLRLKAYNSLKNMHKLGG</sequence>
<evidence type="ECO:0000255" key="1">
    <source>
        <dbReference type="HAMAP-Rule" id="MF_00568"/>
    </source>
</evidence>
<protein>
    <recommendedName>
        <fullName evidence="1">Quinolinate synthase</fullName>
        <ecNumber evidence="1">2.5.1.72</ecNumber>
    </recommendedName>
</protein>
<comment type="function">
    <text evidence="1">Catalyzes the condensation of iminoaspartate with dihydroxyacetone phosphate to form quinolinate.</text>
</comment>
<comment type="catalytic activity">
    <reaction evidence="1">
        <text>iminosuccinate + dihydroxyacetone phosphate = quinolinate + phosphate + 2 H2O + H(+)</text>
        <dbReference type="Rhea" id="RHEA:25888"/>
        <dbReference type="ChEBI" id="CHEBI:15377"/>
        <dbReference type="ChEBI" id="CHEBI:15378"/>
        <dbReference type="ChEBI" id="CHEBI:29959"/>
        <dbReference type="ChEBI" id="CHEBI:43474"/>
        <dbReference type="ChEBI" id="CHEBI:57642"/>
        <dbReference type="ChEBI" id="CHEBI:77875"/>
        <dbReference type="EC" id="2.5.1.72"/>
    </reaction>
    <physiologicalReaction direction="left-to-right" evidence="1">
        <dbReference type="Rhea" id="RHEA:25889"/>
    </physiologicalReaction>
</comment>
<comment type="cofactor">
    <cofactor evidence="1">
        <name>[4Fe-4S] cluster</name>
        <dbReference type="ChEBI" id="CHEBI:49883"/>
    </cofactor>
    <text evidence="1">Binds 1 [4Fe-4S] cluster per subunit.</text>
</comment>
<comment type="pathway">
    <text evidence="1">Cofactor biosynthesis; NAD(+) biosynthesis; quinolinate from iminoaspartate: step 1/1.</text>
</comment>
<comment type="subcellular location">
    <subcellularLocation>
        <location evidence="1">Cytoplasm</location>
    </subcellularLocation>
</comment>
<comment type="similarity">
    <text evidence="1">Belongs to the quinolinate synthase family. Type 2 subfamily.</text>
</comment>
<keyword id="KW-0004">4Fe-4S</keyword>
<keyword id="KW-0963">Cytoplasm</keyword>
<keyword id="KW-0408">Iron</keyword>
<keyword id="KW-0411">Iron-sulfur</keyword>
<keyword id="KW-0479">Metal-binding</keyword>
<keyword id="KW-0662">Pyridine nucleotide biosynthesis</keyword>
<keyword id="KW-1185">Reference proteome</keyword>
<keyword id="KW-0808">Transferase</keyword>
<proteinExistence type="inferred from homology"/>
<organism>
    <name type="scientific">Clostridium perfringens (strain 13 / Type A)</name>
    <dbReference type="NCBI Taxonomy" id="195102"/>
    <lineage>
        <taxon>Bacteria</taxon>
        <taxon>Bacillati</taxon>
        <taxon>Bacillota</taxon>
        <taxon>Clostridia</taxon>
        <taxon>Eubacteriales</taxon>
        <taxon>Clostridiaceae</taxon>
        <taxon>Clostridium</taxon>
    </lineage>
</organism>
<feature type="chain" id="PRO_0000155785" description="Quinolinate synthase">
    <location>
        <begin position="1"/>
        <end position="301"/>
    </location>
</feature>
<feature type="binding site" evidence="1">
    <location>
        <position position="21"/>
    </location>
    <ligand>
        <name>iminosuccinate</name>
        <dbReference type="ChEBI" id="CHEBI:77875"/>
    </ligand>
</feature>
<feature type="binding site" evidence="1">
    <location>
        <position position="38"/>
    </location>
    <ligand>
        <name>iminosuccinate</name>
        <dbReference type="ChEBI" id="CHEBI:77875"/>
    </ligand>
</feature>
<feature type="binding site" evidence="1">
    <location>
        <position position="83"/>
    </location>
    <ligand>
        <name>[4Fe-4S] cluster</name>
        <dbReference type="ChEBI" id="CHEBI:49883"/>
    </ligand>
</feature>
<feature type="binding site" evidence="1">
    <location>
        <begin position="109"/>
        <end position="111"/>
    </location>
    <ligand>
        <name>iminosuccinate</name>
        <dbReference type="ChEBI" id="CHEBI:77875"/>
    </ligand>
</feature>
<feature type="binding site" evidence="1">
    <location>
        <position position="126"/>
    </location>
    <ligand>
        <name>iminosuccinate</name>
        <dbReference type="ChEBI" id="CHEBI:77875"/>
    </ligand>
</feature>
<feature type="binding site" evidence="1">
    <location>
        <position position="169"/>
    </location>
    <ligand>
        <name>[4Fe-4S] cluster</name>
        <dbReference type="ChEBI" id="CHEBI:49883"/>
    </ligand>
</feature>
<feature type="binding site" evidence="1">
    <location>
        <begin position="195"/>
        <end position="197"/>
    </location>
    <ligand>
        <name>iminosuccinate</name>
        <dbReference type="ChEBI" id="CHEBI:77875"/>
    </ligand>
</feature>
<feature type="binding site" evidence="1">
    <location>
        <position position="212"/>
    </location>
    <ligand>
        <name>iminosuccinate</name>
        <dbReference type="ChEBI" id="CHEBI:77875"/>
    </ligand>
</feature>
<feature type="binding site" evidence="1">
    <location>
        <position position="257"/>
    </location>
    <ligand>
        <name>[4Fe-4S] cluster</name>
        <dbReference type="ChEBI" id="CHEBI:49883"/>
    </ligand>
</feature>
<reference key="1">
    <citation type="journal article" date="2002" name="Proc. Natl. Acad. Sci. U.S.A.">
        <title>Complete genome sequence of Clostridium perfringens, an anaerobic flesh-eater.</title>
        <authorList>
            <person name="Shimizu T."/>
            <person name="Ohtani K."/>
            <person name="Hirakawa H."/>
            <person name="Ohshima K."/>
            <person name="Yamashita A."/>
            <person name="Shiba T."/>
            <person name="Ogasawara N."/>
            <person name="Hattori M."/>
            <person name="Kuhara S."/>
            <person name="Hayashi H."/>
        </authorList>
    </citation>
    <scope>NUCLEOTIDE SEQUENCE [LARGE SCALE GENOMIC DNA]</scope>
    <source>
        <strain>13 / Type A</strain>
    </source>
</reference>
<dbReference type="EC" id="2.5.1.72" evidence="1"/>
<dbReference type="EMBL" id="BA000016">
    <property type="protein sequence ID" value="BAB80100.1"/>
    <property type="molecule type" value="Genomic_DNA"/>
</dbReference>
<dbReference type="RefSeq" id="WP_003455349.1">
    <property type="nucleotide sequence ID" value="NC_003366.1"/>
</dbReference>
<dbReference type="SMR" id="Q8XNE3"/>
<dbReference type="STRING" id="195102.gene:10489650"/>
<dbReference type="KEGG" id="cpe:CPE0394"/>
<dbReference type="HOGENOM" id="CLU_047382_0_0_9"/>
<dbReference type="UniPathway" id="UPA00253">
    <property type="reaction ID" value="UER00327"/>
</dbReference>
<dbReference type="Proteomes" id="UP000000818">
    <property type="component" value="Chromosome"/>
</dbReference>
<dbReference type="GO" id="GO:0005829">
    <property type="term" value="C:cytosol"/>
    <property type="evidence" value="ECO:0007669"/>
    <property type="project" value="TreeGrafter"/>
</dbReference>
<dbReference type="GO" id="GO:0051539">
    <property type="term" value="F:4 iron, 4 sulfur cluster binding"/>
    <property type="evidence" value="ECO:0007669"/>
    <property type="project" value="UniProtKB-KW"/>
</dbReference>
<dbReference type="GO" id="GO:0046872">
    <property type="term" value="F:metal ion binding"/>
    <property type="evidence" value="ECO:0007669"/>
    <property type="project" value="UniProtKB-KW"/>
</dbReference>
<dbReference type="GO" id="GO:0008987">
    <property type="term" value="F:quinolinate synthetase A activity"/>
    <property type="evidence" value="ECO:0007669"/>
    <property type="project" value="UniProtKB-UniRule"/>
</dbReference>
<dbReference type="GO" id="GO:0034628">
    <property type="term" value="P:'de novo' NAD biosynthetic process from L-aspartate"/>
    <property type="evidence" value="ECO:0007669"/>
    <property type="project" value="TreeGrafter"/>
</dbReference>
<dbReference type="FunFam" id="3.40.50.10800:FF:000003">
    <property type="entry name" value="Quinolinate synthase A"/>
    <property type="match status" value="1"/>
</dbReference>
<dbReference type="Gene3D" id="3.40.50.10800">
    <property type="entry name" value="NadA-like"/>
    <property type="match status" value="3"/>
</dbReference>
<dbReference type="HAMAP" id="MF_00568">
    <property type="entry name" value="NadA_type2"/>
    <property type="match status" value="1"/>
</dbReference>
<dbReference type="InterPro" id="IPR003473">
    <property type="entry name" value="NadA"/>
</dbReference>
<dbReference type="InterPro" id="IPR036094">
    <property type="entry name" value="NadA_sf"/>
</dbReference>
<dbReference type="InterPro" id="IPR023066">
    <property type="entry name" value="Quinolinate_synth_type2"/>
</dbReference>
<dbReference type="NCBIfam" id="TIGR00550">
    <property type="entry name" value="nadA"/>
    <property type="match status" value="1"/>
</dbReference>
<dbReference type="NCBIfam" id="NF006878">
    <property type="entry name" value="PRK09375.1-2"/>
    <property type="match status" value="1"/>
</dbReference>
<dbReference type="PANTHER" id="PTHR30573:SF0">
    <property type="entry name" value="QUINOLINATE SYNTHASE, CHLOROPLASTIC"/>
    <property type="match status" value="1"/>
</dbReference>
<dbReference type="PANTHER" id="PTHR30573">
    <property type="entry name" value="QUINOLINATE SYNTHETASE A"/>
    <property type="match status" value="1"/>
</dbReference>
<dbReference type="Pfam" id="PF02445">
    <property type="entry name" value="NadA"/>
    <property type="match status" value="1"/>
</dbReference>
<dbReference type="SUPFAM" id="SSF142754">
    <property type="entry name" value="NadA-like"/>
    <property type="match status" value="1"/>
</dbReference>
<accession>Q8XNE3</accession>
<name>NADA_CLOPE</name>
<gene>
    <name evidence="1" type="primary">nadA</name>
    <name type="ordered locus">CPE0394</name>
</gene>